<accession>A7HIA1</accession>
<sequence>MGVRSDTIKKGFERAPHRSLLRATGLTDADFDKPFIGIANSHVDIIPGHFFLQEYGRIAKDEIRKAGGVPFEFNTIGVDDGIAMGHAGMLYSLPSRELIADSIETMMNAHSLDALLCIPNCDKIVPGMLMGALRVDVPTVFCSGGPMKAGRMADGTAIDLTTAFEAVGKRALGQMSDAELYEIECKACPSGGSCSGMFTANSMNVLCEAMGVALPGNGTALALTPEREALLRRAARRAVEIAGDERFRLRRIVNADAIHNAMVVDMAMGGSSNTVLHMLAIAREAGVEFGLRQIEAVAAKVGHIAKIAPSLSTVHIEDVHRAGGVPAVLHEVARRGGVVREDALTVTGETVGERIRGAEIKDRSVIHPLEEAYSAVGGLAVLFGNLAPEGAVVKTAGIQPSMRKFTGRAICFDSQEEAIAGIMGGKVKPGHFVVIRYEGPRGGPGMQEMLAPTSLIMGMGLGEQVALATDGRFSGATRGACVGHVSPEAAEGGPLALVQDGDAVTIDVEARALTVDVPDAELARRREGFRPKRKEIRSSWLKRYALLVSNASAGAVMKTEL</sequence>
<reference key="1">
    <citation type="journal article" date="2015" name="Genome Announc.">
        <title>Complete genome sequence of Anaeromyxobacter sp. Fw109-5, an anaerobic, metal-reducing bacterium isolated from a contaminated subsurface environment.</title>
        <authorList>
            <person name="Hwang C."/>
            <person name="Copeland A."/>
            <person name="Lucas S."/>
            <person name="Lapidus A."/>
            <person name="Barry K."/>
            <person name="Glavina Del Rio T."/>
            <person name="Dalin E."/>
            <person name="Tice H."/>
            <person name="Pitluck S."/>
            <person name="Sims D."/>
            <person name="Brettin T."/>
            <person name="Bruce D.C."/>
            <person name="Detter J.C."/>
            <person name="Han C.S."/>
            <person name="Schmutz J."/>
            <person name="Larimer F.W."/>
            <person name="Land M.L."/>
            <person name="Hauser L.J."/>
            <person name="Kyrpides N."/>
            <person name="Lykidis A."/>
            <person name="Richardson P."/>
            <person name="Belieav A."/>
            <person name="Sanford R.A."/>
            <person name="Loeffler F.E."/>
            <person name="Fields M.W."/>
        </authorList>
    </citation>
    <scope>NUCLEOTIDE SEQUENCE [LARGE SCALE GENOMIC DNA]</scope>
    <source>
        <strain>Fw109-5</strain>
    </source>
</reference>
<name>ILVD_ANADF</name>
<feature type="chain" id="PRO_0000321590" description="Dihydroxy-acid dehydratase">
    <location>
        <begin position="1"/>
        <end position="561"/>
    </location>
</feature>
<feature type="active site" description="Proton acceptor" evidence="1">
    <location>
        <position position="474"/>
    </location>
</feature>
<feature type="binding site" evidence="1">
    <location>
        <position position="80"/>
    </location>
    <ligand>
        <name>Mg(2+)</name>
        <dbReference type="ChEBI" id="CHEBI:18420"/>
    </ligand>
</feature>
<feature type="binding site" evidence="1">
    <location>
        <position position="121"/>
    </location>
    <ligand>
        <name>[2Fe-2S] cluster</name>
        <dbReference type="ChEBI" id="CHEBI:190135"/>
    </ligand>
</feature>
<feature type="binding site" evidence="1">
    <location>
        <position position="122"/>
    </location>
    <ligand>
        <name>Mg(2+)</name>
        <dbReference type="ChEBI" id="CHEBI:18420"/>
    </ligand>
</feature>
<feature type="binding site" description="via carbamate group" evidence="1">
    <location>
        <position position="123"/>
    </location>
    <ligand>
        <name>Mg(2+)</name>
        <dbReference type="ChEBI" id="CHEBI:18420"/>
    </ligand>
</feature>
<feature type="binding site" evidence="1">
    <location>
        <position position="194"/>
    </location>
    <ligand>
        <name>[2Fe-2S] cluster</name>
        <dbReference type="ChEBI" id="CHEBI:190135"/>
    </ligand>
</feature>
<feature type="binding site" evidence="1">
    <location>
        <position position="448"/>
    </location>
    <ligand>
        <name>Mg(2+)</name>
        <dbReference type="ChEBI" id="CHEBI:18420"/>
    </ligand>
</feature>
<feature type="modified residue" description="N6-carboxylysine" evidence="1">
    <location>
        <position position="123"/>
    </location>
</feature>
<proteinExistence type="inferred from homology"/>
<gene>
    <name evidence="1" type="primary">ilvD</name>
    <name type="ordered locus">Anae109_4269</name>
</gene>
<comment type="function">
    <text evidence="1">Functions in the biosynthesis of branched-chain amino acids. Catalyzes the dehydration of (2R,3R)-2,3-dihydroxy-3-methylpentanoate (2,3-dihydroxy-3-methylvalerate) into 2-oxo-3-methylpentanoate (2-oxo-3-methylvalerate) and of (2R)-2,3-dihydroxy-3-methylbutanoate (2,3-dihydroxyisovalerate) into 2-oxo-3-methylbutanoate (2-oxoisovalerate), the penultimate precursor to L-isoleucine and L-valine, respectively.</text>
</comment>
<comment type="catalytic activity">
    <reaction evidence="1">
        <text>(2R)-2,3-dihydroxy-3-methylbutanoate = 3-methyl-2-oxobutanoate + H2O</text>
        <dbReference type="Rhea" id="RHEA:24809"/>
        <dbReference type="ChEBI" id="CHEBI:11851"/>
        <dbReference type="ChEBI" id="CHEBI:15377"/>
        <dbReference type="ChEBI" id="CHEBI:49072"/>
        <dbReference type="EC" id="4.2.1.9"/>
    </reaction>
    <physiologicalReaction direction="left-to-right" evidence="1">
        <dbReference type="Rhea" id="RHEA:24810"/>
    </physiologicalReaction>
</comment>
<comment type="catalytic activity">
    <reaction evidence="1">
        <text>(2R,3R)-2,3-dihydroxy-3-methylpentanoate = (S)-3-methyl-2-oxopentanoate + H2O</text>
        <dbReference type="Rhea" id="RHEA:27694"/>
        <dbReference type="ChEBI" id="CHEBI:15377"/>
        <dbReference type="ChEBI" id="CHEBI:35146"/>
        <dbReference type="ChEBI" id="CHEBI:49258"/>
        <dbReference type="EC" id="4.2.1.9"/>
    </reaction>
    <physiologicalReaction direction="left-to-right" evidence="1">
        <dbReference type="Rhea" id="RHEA:27695"/>
    </physiologicalReaction>
</comment>
<comment type="cofactor">
    <cofactor evidence="1">
        <name>[2Fe-2S] cluster</name>
        <dbReference type="ChEBI" id="CHEBI:190135"/>
    </cofactor>
    <text evidence="1">Binds 1 [2Fe-2S] cluster per subunit. This cluster acts as a Lewis acid cofactor.</text>
</comment>
<comment type="cofactor">
    <cofactor evidence="1">
        <name>Mg(2+)</name>
        <dbReference type="ChEBI" id="CHEBI:18420"/>
    </cofactor>
</comment>
<comment type="pathway">
    <text evidence="1">Amino-acid biosynthesis; L-isoleucine biosynthesis; L-isoleucine from 2-oxobutanoate: step 3/4.</text>
</comment>
<comment type="pathway">
    <text evidence="1">Amino-acid biosynthesis; L-valine biosynthesis; L-valine from pyruvate: step 3/4.</text>
</comment>
<comment type="subunit">
    <text evidence="1">Homodimer.</text>
</comment>
<comment type="similarity">
    <text evidence="1">Belongs to the IlvD/Edd family.</text>
</comment>
<organism>
    <name type="scientific">Anaeromyxobacter sp. (strain Fw109-5)</name>
    <dbReference type="NCBI Taxonomy" id="404589"/>
    <lineage>
        <taxon>Bacteria</taxon>
        <taxon>Pseudomonadati</taxon>
        <taxon>Myxococcota</taxon>
        <taxon>Myxococcia</taxon>
        <taxon>Myxococcales</taxon>
        <taxon>Cystobacterineae</taxon>
        <taxon>Anaeromyxobacteraceae</taxon>
        <taxon>Anaeromyxobacter</taxon>
    </lineage>
</organism>
<evidence type="ECO:0000255" key="1">
    <source>
        <dbReference type="HAMAP-Rule" id="MF_00012"/>
    </source>
</evidence>
<protein>
    <recommendedName>
        <fullName evidence="1">Dihydroxy-acid dehydratase</fullName>
        <shortName evidence="1">DAD</shortName>
        <ecNumber evidence="1">4.2.1.9</ecNumber>
    </recommendedName>
</protein>
<dbReference type="EC" id="4.2.1.9" evidence="1"/>
<dbReference type="EMBL" id="CP000769">
    <property type="protein sequence ID" value="ABS28447.1"/>
    <property type="molecule type" value="Genomic_DNA"/>
</dbReference>
<dbReference type="SMR" id="A7HIA1"/>
<dbReference type="STRING" id="404589.Anae109_4269"/>
<dbReference type="KEGG" id="afw:Anae109_4269"/>
<dbReference type="eggNOG" id="COG0129">
    <property type="taxonomic scope" value="Bacteria"/>
</dbReference>
<dbReference type="HOGENOM" id="CLU_014271_4_2_7"/>
<dbReference type="UniPathway" id="UPA00047">
    <property type="reaction ID" value="UER00057"/>
</dbReference>
<dbReference type="UniPathway" id="UPA00049">
    <property type="reaction ID" value="UER00061"/>
</dbReference>
<dbReference type="Proteomes" id="UP000006382">
    <property type="component" value="Chromosome"/>
</dbReference>
<dbReference type="GO" id="GO:0005829">
    <property type="term" value="C:cytosol"/>
    <property type="evidence" value="ECO:0007669"/>
    <property type="project" value="TreeGrafter"/>
</dbReference>
<dbReference type="GO" id="GO:0051537">
    <property type="term" value="F:2 iron, 2 sulfur cluster binding"/>
    <property type="evidence" value="ECO:0007669"/>
    <property type="project" value="UniProtKB-UniRule"/>
</dbReference>
<dbReference type="GO" id="GO:0004160">
    <property type="term" value="F:dihydroxy-acid dehydratase activity"/>
    <property type="evidence" value="ECO:0007669"/>
    <property type="project" value="UniProtKB-UniRule"/>
</dbReference>
<dbReference type="GO" id="GO:0000287">
    <property type="term" value="F:magnesium ion binding"/>
    <property type="evidence" value="ECO:0007669"/>
    <property type="project" value="UniProtKB-UniRule"/>
</dbReference>
<dbReference type="GO" id="GO:0009097">
    <property type="term" value="P:isoleucine biosynthetic process"/>
    <property type="evidence" value="ECO:0007669"/>
    <property type="project" value="UniProtKB-UniRule"/>
</dbReference>
<dbReference type="GO" id="GO:0009099">
    <property type="term" value="P:L-valine biosynthetic process"/>
    <property type="evidence" value="ECO:0007669"/>
    <property type="project" value="UniProtKB-UniRule"/>
</dbReference>
<dbReference type="FunFam" id="3.50.30.80:FF:000001">
    <property type="entry name" value="Dihydroxy-acid dehydratase"/>
    <property type="match status" value="1"/>
</dbReference>
<dbReference type="Gene3D" id="3.50.30.80">
    <property type="entry name" value="IlvD/EDD C-terminal domain-like"/>
    <property type="match status" value="1"/>
</dbReference>
<dbReference type="HAMAP" id="MF_00012">
    <property type="entry name" value="IlvD"/>
    <property type="match status" value="1"/>
</dbReference>
<dbReference type="InterPro" id="IPR042096">
    <property type="entry name" value="Dihydro-acid_dehy_C"/>
</dbReference>
<dbReference type="InterPro" id="IPR004404">
    <property type="entry name" value="DihydroxyA_deHydtase"/>
</dbReference>
<dbReference type="InterPro" id="IPR020558">
    <property type="entry name" value="DiOHA_6PGluconate_deHydtase_CS"/>
</dbReference>
<dbReference type="InterPro" id="IPR056740">
    <property type="entry name" value="ILV_EDD_C"/>
</dbReference>
<dbReference type="InterPro" id="IPR000581">
    <property type="entry name" value="ILV_EDD_N"/>
</dbReference>
<dbReference type="InterPro" id="IPR037237">
    <property type="entry name" value="IlvD/EDD_N"/>
</dbReference>
<dbReference type="NCBIfam" id="TIGR00110">
    <property type="entry name" value="ilvD"/>
    <property type="match status" value="1"/>
</dbReference>
<dbReference type="NCBIfam" id="NF002068">
    <property type="entry name" value="PRK00911.1"/>
    <property type="match status" value="1"/>
</dbReference>
<dbReference type="PANTHER" id="PTHR43661">
    <property type="entry name" value="D-XYLONATE DEHYDRATASE"/>
    <property type="match status" value="1"/>
</dbReference>
<dbReference type="PANTHER" id="PTHR43661:SF3">
    <property type="entry name" value="D-XYLONATE DEHYDRATASE YAGF-RELATED"/>
    <property type="match status" value="1"/>
</dbReference>
<dbReference type="Pfam" id="PF24877">
    <property type="entry name" value="ILV_EDD_C"/>
    <property type="match status" value="1"/>
</dbReference>
<dbReference type="Pfam" id="PF00920">
    <property type="entry name" value="ILVD_EDD_N"/>
    <property type="match status" value="1"/>
</dbReference>
<dbReference type="SUPFAM" id="SSF143975">
    <property type="entry name" value="IlvD/EDD N-terminal domain-like"/>
    <property type="match status" value="1"/>
</dbReference>
<dbReference type="SUPFAM" id="SSF52016">
    <property type="entry name" value="LeuD/IlvD-like"/>
    <property type="match status" value="1"/>
</dbReference>
<dbReference type="PROSITE" id="PS00886">
    <property type="entry name" value="ILVD_EDD_1"/>
    <property type="match status" value="1"/>
</dbReference>
<keyword id="KW-0001">2Fe-2S</keyword>
<keyword id="KW-0028">Amino-acid biosynthesis</keyword>
<keyword id="KW-0100">Branched-chain amino acid biosynthesis</keyword>
<keyword id="KW-0408">Iron</keyword>
<keyword id="KW-0411">Iron-sulfur</keyword>
<keyword id="KW-0456">Lyase</keyword>
<keyword id="KW-0460">Magnesium</keyword>
<keyword id="KW-0479">Metal-binding</keyword>
<keyword id="KW-1185">Reference proteome</keyword>